<reference key="1">
    <citation type="journal article" date="2007" name="PLoS ONE">
        <title>Analysis of the neurotoxin complex genes in Clostridium botulinum A1-A4 and B1 strains: BoNT/A3, /Ba4 and /B1 clusters are located within plasmids.</title>
        <authorList>
            <person name="Smith T.J."/>
            <person name="Hill K.K."/>
            <person name="Foley B.T."/>
            <person name="Detter J.C."/>
            <person name="Munk A.C."/>
            <person name="Bruce D.C."/>
            <person name="Doggett N.A."/>
            <person name="Smith L.A."/>
            <person name="Marks J.D."/>
            <person name="Xie G."/>
            <person name="Brettin T.S."/>
        </authorList>
    </citation>
    <scope>NUCLEOTIDE SEQUENCE [LARGE SCALE GENOMIC DNA]</scope>
    <source>
        <strain>Okra / Type B1</strain>
    </source>
</reference>
<gene>
    <name evidence="1" type="primary">atpG</name>
    <name type="ordered locus">CLD_0630</name>
</gene>
<dbReference type="EMBL" id="CP000939">
    <property type="protein sequence ID" value="ACA44982.1"/>
    <property type="molecule type" value="Genomic_DNA"/>
</dbReference>
<dbReference type="RefSeq" id="WP_003405061.1">
    <property type="nucleotide sequence ID" value="NC_010516.1"/>
</dbReference>
<dbReference type="SMR" id="B1IE33"/>
<dbReference type="KEGG" id="cbb:CLD_0630"/>
<dbReference type="HOGENOM" id="CLU_050669_0_1_9"/>
<dbReference type="Proteomes" id="UP000008541">
    <property type="component" value="Chromosome"/>
</dbReference>
<dbReference type="GO" id="GO:0005886">
    <property type="term" value="C:plasma membrane"/>
    <property type="evidence" value="ECO:0007669"/>
    <property type="project" value="UniProtKB-SubCell"/>
</dbReference>
<dbReference type="GO" id="GO:0045259">
    <property type="term" value="C:proton-transporting ATP synthase complex"/>
    <property type="evidence" value="ECO:0007669"/>
    <property type="project" value="UniProtKB-KW"/>
</dbReference>
<dbReference type="GO" id="GO:0005524">
    <property type="term" value="F:ATP binding"/>
    <property type="evidence" value="ECO:0007669"/>
    <property type="project" value="UniProtKB-UniRule"/>
</dbReference>
<dbReference type="GO" id="GO:0046933">
    <property type="term" value="F:proton-transporting ATP synthase activity, rotational mechanism"/>
    <property type="evidence" value="ECO:0007669"/>
    <property type="project" value="UniProtKB-UniRule"/>
</dbReference>
<dbReference type="GO" id="GO:0042777">
    <property type="term" value="P:proton motive force-driven plasma membrane ATP synthesis"/>
    <property type="evidence" value="ECO:0007669"/>
    <property type="project" value="UniProtKB-UniRule"/>
</dbReference>
<dbReference type="CDD" id="cd12151">
    <property type="entry name" value="F1-ATPase_gamma"/>
    <property type="match status" value="1"/>
</dbReference>
<dbReference type="FunFam" id="3.40.1380.10:FF:000012">
    <property type="entry name" value="ATP synthase gamma chain"/>
    <property type="match status" value="1"/>
</dbReference>
<dbReference type="Gene3D" id="3.40.1380.10">
    <property type="match status" value="1"/>
</dbReference>
<dbReference type="Gene3D" id="1.10.287.80">
    <property type="entry name" value="ATP synthase, gamma subunit, helix hairpin domain"/>
    <property type="match status" value="1"/>
</dbReference>
<dbReference type="HAMAP" id="MF_00815">
    <property type="entry name" value="ATP_synth_gamma_bact"/>
    <property type="match status" value="1"/>
</dbReference>
<dbReference type="InterPro" id="IPR035968">
    <property type="entry name" value="ATP_synth_F1_ATPase_gsu"/>
</dbReference>
<dbReference type="InterPro" id="IPR000131">
    <property type="entry name" value="ATP_synth_F1_gsu"/>
</dbReference>
<dbReference type="InterPro" id="IPR023632">
    <property type="entry name" value="ATP_synth_F1_gsu_CS"/>
</dbReference>
<dbReference type="NCBIfam" id="TIGR01146">
    <property type="entry name" value="ATPsyn_F1gamma"/>
    <property type="match status" value="1"/>
</dbReference>
<dbReference type="PANTHER" id="PTHR11693">
    <property type="entry name" value="ATP SYNTHASE GAMMA CHAIN"/>
    <property type="match status" value="1"/>
</dbReference>
<dbReference type="PANTHER" id="PTHR11693:SF22">
    <property type="entry name" value="ATP SYNTHASE SUBUNIT GAMMA, MITOCHONDRIAL"/>
    <property type="match status" value="1"/>
</dbReference>
<dbReference type="Pfam" id="PF00231">
    <property type="entry name" value="ATP-synt"/>
    <property type="match status" value="1"/>
</dbReference>
<dbReference type="PRINTS" id="PR00126">
    <property type="entry name" value="ATPASEGAMMA"/>
</dbReference>
<dbReference type="SUPFAM" id="SSF52943">
    <property type="entry name" value="ATP synthase (F1-ATPase), gamma subunit"/>
    <property type="match status" value="1"/>
</dbReference>
<dbReference type="PROSITE" id="PS00153">
    <property type="entry name" value="ATPASE_GAMMA"/>
    <property type="match status" value="1"/>
</dbReference>
<name>ATPG_CLOBK</name>
<protein>
    <recommendedName>
        <fullName evidence="1">ATP synthase gamma chain</fullName>
    </recommendedName>
    <alternativeName>
        <fullName evidence="1">ATP synthase F1 sector gamma subunit</fullName>
    </alternativeName>
    <alternativeName>
        <fullName evidence="1">F-ATPase gamma subunit</fullName>
    </alternativeName>
</protein>
<evidence type="ECO:0000255" key="1">
    <source>
        <dbReference type="HAMAP-Rule" id="MF_00815"/>
    </source>
</evidence>
<keyword id="KW-0066">ATP synthesis</keyword>
<keyword id="KW-1003">Cell membrane</keyword>
<keyword id="KW-0139">CF(1)</keyword>
<keyword id="KW-0375">Hydrogen ion transport</keyword>
<keyword id="KW-0406">Ion transport</keyword>
<keyword id="KW-0472">Membrane</keyword>
<keyword id="KW-0813">Transport</keyword>
<proteinExistence type="inferred from homology"/>
<sequence>MAGAGLIGIRRRIKSVTNIRKITKAMGLVSTAKLRKARVNLEINKKYYNEYKVILKDIINFIEDSNIYIDGNGSHKKLYVIFTSDSGLCGSFNINIINNVINEIKEDKENSLVIVIGQKGRMYLKKLGINTLAEYIEIPDVPTTKEARTIAKNIIKLYSSKEVGEVFLVYSEFYSPVKQQVLINKILPFTKENKSDNKYIEFNPPVTQFIDEILENYLKATILNCFSNSKASENGSRMTAMNGATDNANDLLDNLDLQFNRLRQSAITQEISEIVGGAEAQR</sequence>
<accession>B1IE33</accession>
<feature type="chain" id="PRO_1000134128" description="ATP synthase gamma chain">
    <location>
        <begin position="1"/>
        <end position="282"/>
    </location>
</feature>
<comment type="function">
    <text evidence="1">Produces ATP from ADP in the presence of a proton gradient across the membrane. The gamma chain is believed to be important in regulating ATPase activity and the flow of protons through the CF(0) complex.</text>
</comment>
<comment type="subunit">
    <text evidence="1">F-type ATPases have 2 components, CF(1) - the catalytic core - and CF(0) - the membrane proton channel. CF(1) has five subunits: alpha(3), beta(3), gamma(1), delta(1), epsilon(1). CF(0) has three main subunits: a, b and c.</text>
</comment>
<comment type="subcellular location">
    <subcellularLocation>
        <location evidence="1">Cell membrane</location>
        <topology evidence="1">Peripheral membrane protein</topology>
    </subcellularLocation>
</comment>
<comment type="similarity">
    <text evidence="1">Belongs to the ATPase gamma chain family.</text>
</comment>
<organism>
    <name type="scientific">Clostridium botulinum (strain Okra / Type B1)</name>
    <dbReference type="NCBI Taxonomy" id="498213"/>
    <lineage>
        <taxon>Bacteria</taxon>
        <taxon>Bacillati</taxon>
        <taxon>Bacillota</taxon>
        <taxon>Clostridia</taxon>
        <taxon>Eubacteriales</taxon>
        <taxon>Clostridiaceae</taxon>
        <taxon>Clostridium</taxon>
    </lineage>
</organism>